<reference key="1">
    <citation type="journal article" date="2001" name="Nature">
        <title>Genome sequence of enterohaemorrhagic Escherichia coli O157:H7.</title>
        <authorList>
            <person name="Perna N.T."/>
            <person name="Plunkett G. III"/>
            <person name="Burland V."/>
            <person name="Mau B."/>
            <person name="Glasner J.D."/>
            <person name="Rose D.J."/>
            <person name="Mayhew G.F."/>
            <person name="Evans P.S."/>
            <person name="Gregor J."/>
            <person name="Kirkpatrick H.A."/>
            <person name="Posfai G."/>
            <person name="Hackett J."/>
            <person name="Klink S."/>
            <person name="Boutin A."/>
            <person name="Shao Y."/>
            <person name="Miller L."/>
            <person name="Grotbeck E.J."/>
            <person name="Davis N.W."/>
            <person name="Lim A."/>
            <person name="Dimalanta E.T."/>
            <person name="Potamousis K."/>
            <person name="Apodaca J."/>
            <person name="Anantharaman T.S."/>
            <person name="Lin J."/>
            <person name="Yen G."/>
            <person name="Schwartz D.C."/>
            <person name="Welch R.A."/>
            <person name="Blattner F.R."/>
        </authorList>
    </citation>
    <scope>NUCLEOTIDE SEQUENCE [LARGE SCALE GENOMIC DNA]</scope>
    <source>
        <strain>O157:H7 / EDL933 / ATCC 700927 / EHEC</strain>
    </source>
</reference>
<reference key="2">
    <citation type="journal article" date="2001" name="DNA Res.">
        <title>Complete genome sequence of enterohemorrhagic Escherichia coli O157:H7 and genomic comparison with a laboratory strain K-12.</title>
        <authorList>
            <person name="Hayashi T."/>
            <person name="Makino K."/>
            <person name="Ohnishi M."/>
            <person name="Kurokawa K."/>
            <person name="Ishii K."/>
            <person name="Yokoyama K."/>
            <person name="Han C.-G."/>
            <person name="Ohtsubo E."/>
            <person name="Nakayama K."/>
            <person name="Murata T."/>
            <person name="Tanaka M."/>
            <person name="Tobe T."/>
            <person name="Iida T."/>
            <person name="Takami H."/>
            <person name="Honda T."/>
            <person name="Sasakawa C."/>
            <person name="Ogasawara N."/>
            <person name="Yasunaga T."/>
            <person name="Kuhara S."/>
            <person name="Shiba T."/>
            <person name="Hattori M."/>
            <person name="Shinagawa H."/>
        </authorList>
    </citation>
    <scope>NUCLEOTIDE SEQUENCE [LARGE SCALE GENOMIC DNA]</scope>
    <source>
        <strain>O157:H7 / Sakai / RIMD 0509952 / EHEC</strain>
    </source>
</reference>
<comment type="function">
    <text evidence="1">Hydrolyzes ribosome-free peptidyl-tRNAs (with 1 or more amino acids incorporated), which drop off the ribosome during protein synthesis, or as a result of ribosome stalling.</text>
</comment>
<comment type="function">
    <text evidence="1">Catalyzes the release of premature peptidyl moieties from peptidyl-tRNA molecules trapped in stalled 50S ribosomal subunits, and thus maintains levels of free tRNAs and 50S ribosomes.</text>
</comment>
<comment type="catalytic activity">
    <reaction evidence="1">
        <text>an N-acyl-L-alpha-aminoacyl-tRNA + H2O = an N-acyl-L-amino acid + a tRNA + H(+)</text>
        <dbReference type="Rhea" id="RHEA:54448"/>
        <dbReference type="Rhea" id="RHEA-COMP:10123"/>
        <dbReference type="Rhea" id="RHEA-COMP:13883"/>
        <dbReference type="ChEBI" id="CHEBI:15377"/>
        <dbReference type="ChEBI" id="CHEBI:15378"/>
        <dbReference type="ChEBI" id="CHEBI:59874"/>
        <dbReference type="ChEBI" id="CHEBI:78442"/>
        <dbReference type="ChEBI" id="CHEBI:138191"/>
        <dbReference type="EC" id="3.1.1.29"/>
    </reaction>
</comment>
<comment type="subunit">
    <text evidence="1">Monomer.</text>
</comment>
<comment type="subcellular location">
    <subcellularLocation>
        <location evidence="1">Cytoplasm</location>
    </subcellularLocation>
</comment>
<comment type="similarity">
    <text evidence="1">Belongs to the PTH family.</text>
</comment>
<sequence>MTIKLIVGLANPGAEYAATRHNAGAWFVDLLAERLRAPLREEAKFFGYTSRVTLGGEDVRLLVPTTFMNLSGKAVAAMASFFRINPDEILVAHDELDLPPGVAKFKLGGGHGGHNGLKDIISKLGNNPNFHRLRIGIGHPGDKNKVVGFVLGKPPVSEQKLIDEAIDEAARCTEMWFTDGLTKATNRLHAFKAQ</sequence>
<evidence type="ECO:0000255" key="1">
    <source>
        <dbReference type="HAMAP-Rule" id="MF_00083"/>
    </source>
</evidence>
<proteinExistence type="inferred from homology"/>
<name>PTH_ECO57</name>
<organism>
    <name type="scientific">Escherichia coli O157:H7</name>
    <dbReference type="NCBI Taxonomy" id="83334"/>
    <lineage>
        <taxon>Bacteria</taxon>
        <taxon>Pseudomonadati</taxon>
        <taxon>Pseudomonadota</taxon>
        <taxon>Gammaproteobacteria</taxon>
        <taxon>Enterobacterales</taxon>
        <taxon>Enterobacteriaceae</taxon>
        <taxon>Escherichia</taxon>
    </lineage>
</organism>
<gene>
    <name evidence="1" type="primary">pth</name>
    <name type="ordered locus">Z1975</name>
    <name type="ordered locus">ECs1709</name>
</gene>
<dbReference type="EC" id="3.1.1.29" evidence="1"/>
<dbReference type="EMBL" id="AE005174">
    <property type="protein sequence ID" value="AAG56062.1"/>
    <property type="molecule type" value="Genomic_DNA"/>
</dbReference>
<dbReference type="EMBL" id="BA000007">
    <property type="protein sequence ID" value="BAB35132.1"/>
    <property type="molecule type" value="Genomic_DNA"/>
</dbReference>
<dbReference type="PIR" id="B85700">
    <property type="entry name" value="B85700"/>
</dbReference>
<dbReference type="PIR" id="E90842">
    <property type="entry name" value="E90842"/>
</dbReference>
<dbReference type="RefSeq" id="NP_309736.1">
    <property type="nucleotide sequence ID" value="NC_002695.1"/>
</dbReference>
<dbReference type="RefSeq" id="WP_000152933.1">
    <property type="nucleotide sequence ID" value="NZ_VOAI01000038.1"/>
</dbReference>
<dbReference type="SMR" id="P0A7D3"/>
<dbReference type="STRING" id="155864.Z1975"/>
<dbReference type="GeneID" id="913154"/>
<dbReference type="GeneID" id="93775269"/>
<dbReference type="KEGG" id="ece:Z1975"/>
<dbReference type="KEGG" id="ecs:ECs_1709"/>
<dbReference type="PATRIC" id="fig|386585.9.peg.1807"/>
<dbReference type="eggNOG" id="COG0193">
    <property type="taxonomic scope" value="Bacteria"/>
</dbReference>
<dbReference type="HOGENOM" id="CLU_062456_3_1_6"/>
<dbReference type="OMA" id="PNTYMNL"/>
<dbReference type="SABIO-RK" id="P0A7D3"/>
<dbReference type="Proteomes" id="UP000000558">
    <property type="component" value="Chromosome"/>
</dbReference>
<dbReference type="Proteomes" id="UP000002519">
    <property type="component" value="Chromosome"/>
</dbReference>
<dbReference type="GO" id="GO:0005737">
    <property type="term" value="C:cytoplasm"/>
    <property type="evidence" value="ECO:0007669"/>
    <property type="project" value="UniProtKB-SubCell"/>
</dbReference>
<dbReference type="GO" id="GO:0004045">
    <property type="term" value="F:peptidyl-tRNA hydrolase activity"/>
    <property type="evidence" value="ECO:0007669"/>
    <property type="project" value="UniProtKB-UniRule"/>
</dbReference>
<dbReference type="GO" id="GO:0000049">
    <property type="term" value="F:tRNA binding"/>
    <property type="evidence" value="ECO:0007669"/>
    <property type="project" value="UniProtKB-UniRule"/>
</dbReference>
<dbReference type="GO" id="GO:0006515">
    <property type="term" value="P:protein quality control for misfolded or incompletely synthesized proteins"/>
    <property type="evidence" value="ECO:0007669"/>
    <property type="project" value="UniProtKB-UniRule"/>
</dbReference>
<dbReference type="GO" id="GO:0072344">
    <property type="term" value="P:rescue of stalled ribosome"/>
    <property type="evidence" value="ECO:0007669"/>
    <property type="project" value="UniProtKB-UniRule"/>
</dbReference>
<dbReference type="CDD" id="cd00462">
    <property type="entry name" value="PTH"/>
    <property type="match status" value="1"/>
</dbReference>
<dbReference type="FunFam" id="3.40.50.1470:FF:000001">
    <property type="entry name" value="Peptidyl-tRNA hydrolase"/>
    <property type="match status" value="1"/>
</dbReference>
<dbReference type="Gene3D" id="3.40.50.1470">
    <property type="entry name" value="Peptidyl-tRNA hydrolase"/>
    <property type="match status" value="1"/>
</dbReference>
<dbReference type="HAMAP" id="MF_00083">
    <property type="entry name" value="Pept_tRNA_hydro_bact"/>
    <property type="match status" value="1"/>
</dbReference>
<dbReference type="InterPro" id="IPR001328">
    <property type="entry name" value="Pept_tRNA_hydro"/>
</dbReference>
<dbReference type="InterPro" id="IPR018171">
    <property type="entry name" value="Pept_tRNA_hydro_CS"/>
</dbReference>
<dbReference type="InterPro" id="IPR036416">
    <property type="entry name" value="Pept_tRNA_hydro_sf"/>
</dbReference>
<dbReference type="NCBIfam" id="TIGR00447">
    <property type="entry name" value="pth"/>
    <property type="match status" value="1"/>
</dbReference>
<dbReference type="PANTHER" id="PTHR17224">
    <property type="entry name" value="PEPTIDYL-TRNA HYDROLASE"/>
    <property type="match status" value="1"/>
</dbReference>
<dbReference type="PANTHER" id="PTHR17224:SF1">
    <property type="entry name" value="PEPTIDYL-TRNA HYDROLASE"/>
    <property type="match status" value="1"/>
</dbReference>
<dbReference type="Pfam" id="PF01195">
    <property type="entry name" value="Pept_tRNA_hydro"/>
    <property type="match status" value="1"/>
</dbReference>
<dbReference type="SUPFAM" id="SSF53178">
    <property type="entry name" value="Peptidyl-tRNA hydrolase-like"/>
    <property type="match status" value="1"/>
</dbReference>
<dbReference type="PROSITE" id="PS01195">
    <property type="entry name" value="PEPT_TRNA_HYDROL_1"/>
    <property type="match status" value="1"/>
</dbReference>
<dbReference type="PROSITE" id="PS01196">
    <property type="entry name" value="PEPT_TRNA_HYDROL_2"/>
    <property type="match status" value="1"/>
</dbReference>
<accession>P0A7D3</accession>
<accession>P23932</accession>
<protein>
    <recommendedName>
        <fullName evidence="1">Peptidyl-tRNA hydrolase</fullName>
        <shortName evidence="1">Pth</shortName>
        <ecNumber evidence="1">3.1.1.29</ecNumber>
    </recommendedName>
</protein>
<keyword id="KW-0963">Cytoplasm</keyword>
<keyword id="KW-0378">Hydrolase</keyword>
<keyword id="KW-1185">Reference proteome</keyword>
<keyword id="KW-0694">RNA-binding</keyword>
<keyword id="KW-0820">tRNA-binding</keyword>
<feature type="chain" id="PRO_0000187734" description="Peptidyl-tRNA hydrolase">
    <location>
        <begin position="1"/>
        <end position="194"/>
    </location>
</feature>
<feature type="active site" description="Proton acceptor" evidence="1">
    <location>
        <position position="21"/>
    </location>
</feature>
<feature type="binding site" evidence="1">
    <location>
        <position position="16"/>
    </location>
    <ligand>
        <name>tRNA</name>
        <dbReference type="ChEBI" id="CHEBI:17843"/>
    </ligand>
</feature>
<feature type="binding site" evidence="1">
    <location>
        <position position="67"/>
    </location>
    <ligand>
        <name>tRNA</name>
        <dbReference type="ChEBI" id="CHEBI:17843"/>
    </ligand>
</feature>
<feature type="binding site" evidence="1">
    <location>
        <position position="69"/>
    </location>
    <ligand>
        <name>tRNA</name>
        <dbReference type="ChEBI" id="CHEBI:17843"/>
    </ligand>
</feature>
<feature type="binding site" evidence="1">
    <location>
        <position position="115"/>
    </location>
    <ligand>
        <name>tRNA</name>
        <dbReference type="ChEBI" id="CHEBI:17843"/>
    </ligand>
</feature>
<feature type="site" description="Discriminates between blocked and unblocked aminoacyl-tRNA" evidence="1">
    <location>
        <position position="11"/>
    </location>
</feature>
<feature type="site" description="Stabilizes the basic form of H active site to accept a proton" evidence="1">
    <location>
        <position position="94"/>
    </location>
</feature>